<organism>
    <name type="scientific">Xenopus laevis</name>
    <name type="common">African clawed frog</name>
    <dbReference type="NCBI Taxonomy" id="8355"/>
    <lineage>
        <taxon>Eukaryota</taxon>
        <taxon>Metazoa</taxon>
        <taxon>Chordata</taxon>
        <taxon>Craniata</taxon>
        <taxon>Vertebrata</taxon>
        <taxon>Euteleostomi</taxon>
        <taxon>Amphibia</taxon>
        <taxon>Batrachia</taxon>
        <taxon>Anura</taxon>
        <taxon>Pipoidea</taxon>
        <taxon>Pipidae</taxon>
        <taxon>Xenopodinae</taxon>
        <taxon>Xenopus</taxon>
        <taxon>Xenopus</taxon>
    </lineage>
</organism>
<dbReference type="EMBL" id="BC068793">
    <property type="protein sequence ID" value="AAH68793.1"/>
    <property type="molecule type" value="mRNA"/>
</dbReference>
<dbReference type="RefSeq" id="NP_001084572.1">
    <property type="nucleotide sequence ID" value="NM_001091103.1"/>
</dbReference>
<dbReference type="SMR" id="Q6NU09"/>
<dbReference type="GlyCosmos" id="Q6NU09">
    <property type="glycosylation" value="3 sites, No reported glycans"/>
</dbReference>
<dbReference type="DNASU" id="414524"/>
<dbReference type="GeneID" id="414524"/>
<dbReference type="KEGG" id="xla:414524"/>
<dbReference type="AGR" id="Xenbase:XB-GENE-6041153"/>
<dbReference type="CTD" id="414524"/>
<dbReference type="Xenbase" id="XB-GENE-6041153">
    <property type="gene designation" value="lrrc8e.L"/>
</dbReference>
<dbReference type="OrthoDB" id="2021138at2759"/>
<dbReference type="Proteomes" id="UP000186698">
    <property type="component" value="Chromosome 3L"/>
</dbReference>
<dbReference type="Bgee" id="414524">
    <property type="expression patterns" value="Expressed in egg cell and 19 other cell types or tissues"/>
</dbReference>
<dbReference type="GO" id="GO:0005737">
    <property type="term" value="C:cytoplasm"/>
    <property type="evidence" value="ECO:0000250"/>
    <property type="project" value="UniProtKB"/>
</dbReference>
<dbReference type="GO" id="GO:0005789">
    <property type="term" value="C:endoplasmic reticulum membrane"/>
    <property type="evidence" value="ECO:0007669"/>
    <property type="project" value="UniProtKB-SubCell"/>
</dbReference>
<dbReference type="GO" id="GO:0005765">
    <property type="term" value="C:lysosomal membrane"/>
    <property type="evidence" value="ECO:0000250"/>
    <property type="project" value="UniProtKB"/>
</dbReference>
<dbReference type="GO" id="GO:0034702">
    <property type="term" value="C:monoatomic ion channel complex"/>
    <property type="evidence" value="ECO:0000250"/>
    <property type="project" value="UniProtKB"/>
</dbReference>
<dbReference type="GO" id="GO:0005886">
    <property type="term" value="C:plasma membrane"/>
    <property type="evidence" value="ECO:0000250"/>
    <property type="project" value="UniProtKB"/>
</dbReference>
<dbReference type="GO" id="GO:0015810">
    <property type="term" value="P:aspartate transmembrane transport"/>
    <property type="evidence" value="ECO:0000250"/>
    <property type="project" value="UniProtKB"/>
</dbReference>
<dbReference type="GO" id="GO:0006884">
    <property type="term" value="P:cell volume homeostasis"/>
    <property type="evidence" value="ECO:0000250"/>
    <property type="project" value="UniProtKB"/>
</dbReference>
<dbReference type="GO" id="GO:0071470">
    <property type="term" value="P:cellular response to osmotic stress"/>
    <property type="evidence" value="ECO:0000250"/>
    <property type="project" value="UniProtKB"/>
</dbReference>
<dbReference type="GO" id="GO:0140361">
    <property type="term" value="P:cyclic-GMP-AMP transmembrane import across plasma membrane"/>
    <property type="evidence" value="ECO:0000250"/>
    <property type="project" value="UniProtKB"/>
</dbReference>
<dbReference type="GO" id="GO:0098656">
    <property type="term" value="P:monoatomic anion transmembrane transport"/>
    <property type="evidence" value="ECO:0000250"/>
    <property type="project" value="UniProtKB"/>
</dbReference>
<dbReference type="FunFam" id="3.80.10.10:FF:000123">
    <property type="entry name" value="Volume-regulated anion channel subunit LRRC8D"/>
    <property type="match status" value="1"/>
</dbReference>
<dbReference type="Gene3D" id="3.80.10.10">
    <property type="entry name" value="Ribonuclease Inhibitor"/>
    <property type="match status" value="1"/>
</dbReference>
<dbReference type="InterPro" id="IPR001611">
    <property type="entry name" value="Leu-rich_rpt"/>
</dbReference>
<dbReference type="InterPro" id="IPR003591">
    <property type="entry name" value="Leu-rich_rpt_typical-subtyp"/>
</dbReference>
<dbReference type="InterPro" id="IPR032675">
    <property type="entry name" value="LRR_dom_sf"/>
</dbReference>
<dbReference type="InterPro" id="IPR050216">
    <property type="entry name" value="LRR_domain-containing"/>
</dbReference>
<dbReference type="InterPro" id="IPR021040">
    <property type="entry name" value="LRRC8_Pannexin-like"/>
</dbReference>
<dbReference type="PANTHER" id="PTHR48051">
    <property type="match status" value="1"/>
</dbReference>
<dbReference type="PANTHER" id="PTHR48051:SF1">
    <property type="entry name" value="RAS SUPPRESSOR PROTEIN 1"/>
    <property type="match status" value="1"/>
</dbReference>
<dbReference type="Pfam" id="PF13855">
    <property type="entry name" value="LRR_8"/>
    <property type="match status" value="2"/>
</dbReference>
<dbReference type="Pfam" id="PF12534">
    <property type="entry name" value="Pannexin_like"/>
    <property type="match status" value="1"/>
</dbReference>
<dbReference type="SMART" id="SM00369">
    <property type="entry name" value="LRR_TYP"/>
    <property type="match status" value="6"/>
</dbReference>
<dbReference type="SUPFAM" id="SSF52058">
    <property type="entry name" value="L domain-like"/>
    <property type="match status" value="1"/>
</dbReference>
<dbReference type="PROSITE" id="PS51450">
    <property type="entry name" value="LRR"/>
    <property type="match status" value="7"/>
</dbReference>
<feature type="chain" id="PRO_0000076253" description="Volume-regulated anion channel subunit LRRC8E">
    <location>
        <begin position="1"/>
        <end position="806"/>
    </location>
</feature>
<feature type="topological domain" description="Cytoplasmic" evidence="7">
    <location>
        <begin position="1"/>
        <end position="22"/>
    </location>
</feature>
<feature type="transmembrane region" description="Helical; Name=1" evidence="5">
    <location>
        <begin position="23"/>
        <end position="43"/>
    </location>
</feature>
<feature type="topological domain" description="Extracellular" evidence="7">
    <location>
        <begin position="44"/>
        <end position="130"/>
    </location>
</feature>
<feature type="transmembrane region" description="Helical; Name=2" evidence="5">
    <location>
        <begin position="131"/>
        <end position="151"/>
    </location>
</feature>
<feature type="topological domain" description="Cytoplasmic" evidence="7">
    <location>
        <begin position="152"/>
        <end position="275"/>
    </location>
</feature>
<feature type="transmembrane region" description="Helical; Name=3" evidence="5">
    <location>
        <begin position="276"/>
        <end position="296"/>
    </location>
</feature>
<feature type="topological domain" description="Extracellular" evidence="7">
    <location>
        <begin position="297"/>
        <end position="323"/>
    </location>
</feature>
<feature type="transmembrane region" description="Helical; Name=4" evidence="5">
    <location>
        <begin position="324"/>
        <end position="344"/>
    </location>
</feature>
<feature type="topological domain" description="Cytoplasmic" evidence="7">
    <location>
        <begin position="345"/>
        <end position="806"/>
    </location>
</feature>
<feature type="repeat" description="LRR 1">
    <location>
        <begin position="569"/>
        <end position="589"/>
    </location>
</feature>
<feature type="repeat" description="LRR 2">
    <location>
        <begin position="593"/>
        <end position="614"/>
    </location>
</feature>
<feature type="repeat" description="LRR 3">
    <location>
        <begin position="616"/>
        <end position="637"/>
    </location>
</feature>
<feature type="repeat" description="LRR 4">
    <location>
        <begin position="641"/>
        <end position="662"/>
    </location>
</feature>
<feature type="repeat" description="LRR 5">
    <location>
        <begin position="664"/>
        <end position="685"/>
    </location>
</feature>
<feature type="repeat" description="LRR 6">
    <location>
        <begin position="687"/>
        <end position="708"/>
    </location>
</feature>
<feature type="repeat" description="LRR 7">
    <location>
        <begin position="710"/>
        <end position="731"/>
    </location>
</feature>
<feature type="repeat" description="LRR 8">
    <location>
        <begin position="733"/>
        <end position="754"/>
    </location>
</feature>
<feature type="repeat" description="LRR 9">
    <location>
        <begin position="756"/>
        <end position="777"/>
    </location>
</feature>
<feature type="region of interest" description="Disordered" evidence="6">
    <location>
        <begin position="75"/>
        <end position="104"/>
    </location>
</feature>
<feature type="region of interest" description="Disordered" evidence="6">
    <location>
        <begin position="182"/>
        <end position="217"/>
    </location>
</feature>
<feature type="compositionally biased region" description="Basic and acidic residues" evidence="6">
    <location>
        <begin position="188"/>
        <end position="207"/>
    </location>
</feature>
<feature type="glycosylation site" description="N-linked (GlcNAc...) asparagine" evidence="5">
    <location>
        <position position="57"/>
    </location>
</feature>
<feature type="glycosylation site" description="N-linked (GlcNAc...) asparagine" evidence="5">
    <location>
        <position position="80"/>
    </location>
</feature>
<feature type="glycosylation site" description="N-linked (GlcNAc...) asparagine" evidence="5">
    <location>
        <position position="312"/>
    </location>
</feature>
<feature type="disulfide bond" evidence="3">
    <location>
        <begin position="54"/>
        <end position="311"/>
    </location>
</feature>
<keyword id="KW-1003">Cell membrane</keyword>
<keyword id="KW-1015">Disulfide bond</keyword>
<keyword id="KW-0256">Endoplasmic reticulum</keyword>
<keyword id="KW-0325">Glycoprotein</keyword>
<keyword id="KW-0407">Ion channel</keyword>
<keyword id="KW-0406">Ion transport</keyword>
<keyword id="KW-0433">Leucine-rich repeat</keyword>
<keyword id="KW-0458">Lysosome</keyword>
<keyword id="KW-0472">Membrane</keyword>
<keyword id="KW-1185">Reference proteome</keyword>
<keyword id="KW-0677">Repeat</keyword>
<keyword id="KW-0812">Transmembrane</keyword>
<keyword id="KW-1133">Transmembrane helix</keyword>
<keyword id="KW-0813">Transport</keyword>
<proteinExistence type="evidence at transcript level"/>
<comment type="function">
    <text evidence="2">Non-essential component of the volume-regulated anion channel (VRAC, also named VSOAC channel), an anion channel required to maintain a constant cell volume in response to extracellular or intracellular osmotic changes. The VRAC channel conducts iodide better than chloride and can also conduct organic osmolytes like taurine. Mediates efflux of amino acids, such as aspartate, in response to osmotic stress. The VRAC channel also mediates transport of immunoreactive cyclic dinucleotide GMP-AMP (2'-3'-cGAMP), an immune messenger produced in response to DNA virus in the cytosol. Channel activity requires lrrc8a plus at least one other family member (lrrc8b, lrrc8c, lrrc8d or lrrc8e); channel characteristics depend on the precise subunit composition. Also plays a role in lysosome homeostasis by forming functional lysosomal VRAC channels in response to low cytoplasmic ionic strength condition: lysosomal VRAC channels are necessary for the formation of large lysosome-derived vacuoles, which store and then expel excess water to maintain cytosolic water homeostasis.</text>
</comment>
<comment type="catalytic activity">
    <reaction evidence="2">
        <text>chloride(in) = chloride(out)</text>
        <dbReference type="Rhea" id="RHEA:29823"/>
        <dbReference type="ChEBI" id="CHEBI:17996"/>
    </reaction>
</comment>
<comment type="catalytic activity">
    <reaction evidence="2">
        <text>iodide(out) = iodide(in)</text>
        <dbReference type="Rhea" id="RHEA:66324"/>
        <dbReference type="ChEBI" id="CHEBI:16382"/>
    </reaction>
</comment>
<comment type="catalytic activity">
    <reaction evidence="2">
        <text>taurine(out) = taurine(in)</text>
        <dbReference type="Rhea" id="RHEA:66328"/>
        <dbReference type="ChEBI" id="CHEBI:507393"/>
    </reaction>
</comment>
<comment type="catalytic activity">
    <reaction evidence="2">
        <text>2',3'-cGAMP(out) = 2',3'-cGAMP(in)</text>
        <dbReference type="Rhea" id="RHEA:66320"/>
        <dbReference type="ChEBI" id="CHEBI:143093"/>
    </reaction>
    <physiologicalReaction direction="left-to-right" evidence="2">
        <dbReference type="Rhea" id="RHEA:66321"/>
    </physiologicalReaction>
    <physiologicalReaction direction="right-to-left" evidence="2">
        <dbReference type="Rhea" id="RHEA:66322"/>
    </physiologicalReaction>
</comment>
<comment type="subunit">
    <text evidence="2">Heterohexamer; oligomerizes with other LRRC8 proteins (lrrc8a, lrrc8c, lrrc8d and/or lrrc8b) to form a heterohexamer. Detected in a channel complex that contains lrrc8a, lrrc8c and lrrc8e. In vivo, the subunit composition may depend primarily on expression levels, and heterooligomeric channels containing various proportions of the different LRRC8 proteins may coexist.</text>
</comment>
<comment type="subcellular location">
    <subcellularLocation>
        <location evidence="2">Cell membrane</location>
        <topology evidence="2">Multi-pass membrane protein</topology>
    </subcellularLocation>
    <subcellularLocation>
        <location evidence="2">Endoplasmic reticulum membrane</location>
    </subcellularLocation>
    <subcellularLocation>
        <location evidence="2">Lysosome membrane</location>
        <topology evidence="2">Multi-pass membrane protein</topology>
    </subcellularLocation>
    <subcellularLocation>
        <location evidence="2">Endoplasmic reticulum membrane</location>
        <topology evidence="2">Multi-pass membrane protein</topology>
    </subcellularLocation>
    <text evidence="2">In the absence of lrrc8a, resides primarily in the endoplasmic reticulum. Requires lrrc8a for localization at the cell membrane or lysosome membrane.</text>
</comment>
<comment type="domain">
    <text evidence="4">The volume-regulated anion channel (VRAC) channel forms a trimer of dimers, with symmetry mismatch between the pore-forming domain and the cytosolic LRR repeats, a topology similar to gap junction proteins.</text>
</comment>
<comment type="similarity">
    <text evidence="7">Belongs to the LRRC8 family.</text>
</comment>
<gene>
    <name evidence="2" type="primary">lrrc8e</name>
</gene>
<name>LRC8E_XENLA</name>
<reference key="1">
    <citation type="submission" date="2004-04" db="EMBL/GenBank/DDBJ databases">
        <authorList>
            <consortium name="NIH - Xenopus Gene Collection (XGC) project"/>
        </authorList>
    </citation>
    <scope>NUCLEOTIDE SEQUENCE [LARGE SCALE MRNA]</scope>
    <source>
        <tissue>Embryo</tissue>
    </source>
</reference>
<sequence length="806" mass="92244">MIPVAEFKQFTEQQPAFKVLKPWWDVLAEYITYAMLMIGVFGCTLQVTQDKIICLPNHTSADVVSQITCQEFTQQSSASNDSDLETTVPPPTATSSPPREMSGLRNNLDLQQYSFINQMCYETALHWYAKYFPYLVVIHTLIFIICGNFWFKFPGTSSKIEHFISILGKCFDSPWTTRALSEVSGESSQEKPNQERSIDRELSKPNFEEGSPATADLPIPDKLVAETSSASALDKKEGEQAKALFEKVKKFRHHVEEGDLLYSMYMRQTVLKVCKFVLITIYNAVLVGKIHFIVPCSVHTEDMTGYNSFCCNHTKAHLFSKLAISYLCFLGVYGLTCFYTLYWLFRRPLKEYSFRSVREETGIGDIPDVKNDFAFVLHLVDQYDSLYSKRFAVFLSEVSESRLRQLNLNHEWPADKLRQKLQHTPEGRLELHLFKLPGLPDTVFEVAEMESLKLEMVNEALIPPLVSKLVRLEELSLLNCTAKVQHASMAYLRDHLRILQVKFDDIKEIPLWIFGLRALEELHLFGWLSQDLSKNPALESLRELKSLKVLTIKSNLSKIPATVADVAGHLQKFSIHNDGTKLLTLNALKRLVLVKELELVRCELERIPHAVFSLTNLQVLDLKENTLHTIEEIISLQHCRKLSVLRLWHNQIAYIPDHIRKLKGLEELSLNRNKILVIPSQLFLCNKLRHLDLSFNEIRELPPEIGVLQLLQYLGLSGNFLEDLPTELFFCQKLKTLKLGQNRLASLSPKVGSLVCLVKLELKGNRMDMLPPEIGNCLSLKRSGLNVESLLFDTLPVDVRDKFKED</sequence>
<protein>
    <recommendedName>
        <fullName evidence="1">Volume-regulated anion channel subunit LRRC8E</fullName>
    </recommendedName>
    <alternativeName>
        <fullName evidence="2">Leucine-rich repeat-containing protein 8E</fullName>
    </alternativeName>
</protein>
<evidence type="ECO:0000250" key="1">
    <source>
        <dbReference type="UniProtKB" id="Q66JT1"/>
    </source>
</evidence>
<evidence type="ECO:0000250" key="2">
    <source>
        <dbReference type="UniProtKB" id="Q6NSJ5"/>
    </source>
</evidence>
<evidence type="ECO:0000250" key="3">
    <source>
        <dbReference type="UniProtKB" id="Q80WG5"/>
    </source>
</evidence>
<evidence type="ECO:0000250" key="4">
    <source>
        <dbReference type="UniProtKB" id="Q8IWT6"/>
    </source>
</evidence>
<evidence type="ECO:0000255" key="5"/>
<evidence type="ECO:0000256" key="6">
    <source>
        <dbReference type="SAM" id="MobiDB-lite"/>
    </source>
</evidence>
<evidence type="ECO:0000305" key="7"/>
<accession>Q6NU09</accession>